<proteinExistence type="evidence at protein level"/>
<accession>Q65NA4</accession>
<accession>Q62YQ6</accession>
<protein>
    <recommendedName>
        <fullName>Spore germination lipase LipC</fullName>
        <ecNumber>3.-.-.-</ecNumber>
    </recommendedName>
</protein>
<evidence type="ECO:0000250" key="1"/>
<evidence type="ECO:0000305" key="2"/>
<evidence type="ECO:0007829" key="3">
    <source>
        <dbReference type="PDB" id="6NKD"/>
    </source>
</evidence>
<gene>
    <name type="primary">lipC</name>
    <name type="synonym">ycsK</name>
    <name type="ordered locus">BLi00504</name>
    <name type="ordered locus">BL02812</name>
</gene>
<keyword id="KW-0002">3D-structure</keyword>
<keyword id="KW-0378">Hydrolase</keyword>
<keyword id="KW-1185">Reference proteome</keyword>
<keyword id="KW-0749">Sporulation</keyword>
<name>LIPC_BACLD</name>
<comment type="function">
    <text evidence="1">Lipase involved in spore germination.</text>
</comment>
<comment type="subcellular location">
    <subcellularLocation>
        <location evidence="1">Spore coat</location>
    </subcellularLocation>
</comment>
<comment type="similarity">
    <text evidence="2">Belongs to the 'GDSL' lipolytic enzyme family.</text>
</comment>
<feature type="chain" id="PRO_0000281677" description="Spore germination lipase LipC">
    <location>
        <begin position="1"/>
        <end position="212"/>
    </location>
</feature>
<feature type="active site" description="Nucleophile" evidence="1">
    <location>
        <position position="11"/>
    </location>
</feature>
<feature type="active site" evidence="1">
    <location>
        <position position="186"/>
    </location>
</feature>
<feature type="active site" evidence="1">
    <location>
        <position position="189"/>
    </location>
</feature>
<feature type="binding site" evidence="1">
    <location>
        <position position="50"/>
    </location>
    <ligand>
        <name>substrate</name>
    </ligand>
</feature>
<feature type="binding site" evidence="1">
    <location>
        <position position="82"/>
    </location>
    <ligand>
        <name>substrate</name>
    </ligand>
</feature>
<feature type="strand" evidence="3">
    <location>
        <begin position="3"/>
        <end position="10"/>
    </location>
</feature>
<feature type="helix" evidence="3">
    <location>
        <begin position="11"/>
        <end position="14"/>
    </location>
</feature>
<feature type="turn" evidence="3">
    <location>
        <begin position="15"/>
        <end position="17"/>
    </location>
</feature>
<feature type="helix" evidence="3">
    <location>
        <begin position="25"/>
        <end position="37"/>
    </location>
</feature>
<feature type="strand" evidence="3">
    <location>
        <begin position="41"/>
        <end position="47"/>
    </location>
</feature>
<feature type="helix" evidence="3">
    <location>
        <begin position="53"/>
        <end position="59"/>
    </location>
</feature>
<feature type="helix" evidence="3">
    <location>
        <begin position="63"/>
        <end position="71"/>
    </location>
</feature>
<feature type="strand" evidence="3">
    <location>
        <begin position="73"/>
        <end position="77"/>
    </location>
</feature>
<feature type="helix" evidence="3">
    <location>
        <begin position="81"/>
        <end position="94"/>
    </location>
</feature>
<feature type="helix" evidence="3">
    <location>
        <begin position="98"/>
        <end position="122"/>
    </location>
</feature>
<feature type="strand" evidence="3">
    <location>
        <begin position="130"/>
        <end position="134"/>
    </location>
</feature>
<feature type="helix" evidence="3">
    <location>
        <begin position="144"/>
        <end position="157"/>
    </location>
</feature>
<feature type="helix" evidence="3">
    <location>
        <begin position="158"/>
        <end position="160"/>
    </location>
</feature>
<feature type="turn" evidence="3">
    <location>
        <begin position="163"/>
        <end position="165"/>
    </location>
</feature>
<feature type="strand" evidence="3">
    <location>
        <begin position="166"/>
        <end position="169"/>
    </location>
</feature>
<feature type="helix" evidence="3">
    <location>
        <begin position="171"/>
        <end position="175"/>
    </location>
</feature>
<feature type="helix" evidence="3">
    <location>
        <begin position="179"/>
        <end position="182"/>
    </location>
</feature>
<feature type="strand" evidence="3">
    <location>
        <begin position="187"/>
        <end position="190"/>
    </location>
</feature>
<feature type="helix" evidence="3">
    <location>
        <begin position="192"/>
        <end position="204"/>
    </location>
</feature>
<feature type="helix" evidence="3">
    <location>
        <begin position="208"/>
        <end position="210"/>
    </location>
</feature>
<dbReference type="EC" id="3.-.-.-"/>
<dbReference type="EMBL" id="AE017333">
    <property type="protein sequence ID" value="AAU39460.1"/>
    <property type="molecule type" value="Genomic_DNA"/>
</dbReference>
<dbReference type="EMBL" id="CP000002">
    <property type="protein sequence ID" value="AAU22102.1"/>
    <property type="molecule type" value="Genomic_DNA"/>
</dbReference>
<dbReference type="RefSeq" id="WP_011197556.1">
    <property type="nucleotide sequence ID" value="NC_006322.1"/>
</dbReference>
<dbReference type="PDB" id="6NKD">
    <property type="method" value="X-ray"/>
    <property type="resolution" value="2.80 A"/>
    <property type="chains" value="A/B=1-212"/>
</dbReference>
<dbReference type="PDBsum" id="6NKD"/>
<dbReference type="SMR" id="Q65NA4"/>
<dbReference type="STRING" id="279010.BL02812"/>
<dbReference type="KEGG" id="bld:BLi00504"/>
<dbReference type="KEGG" id="bli:BL02812"/>
<dbReference type="eggNOG" id="COG2755">
    <property type="taxonomic scope" value="Bacteria"/>
</dbReference>
<dbReference type="HOGENOM" id="CLU_076859_3_0_9"/>
<dbReference type="Proteomes" id="UP000000606">
    <property type="component" value="Chromosome"/>
</dbReference>
<dbReference type="GO" id="GO:0004622">
    <property type="term" value="F:lysophospholipase activity"/>
    <property type="evidence" value="ECO:0007669"/>
    <property type="project" value="TreeGrafter"/>
</dbReference>
<dbReference type="GO" id="GO:0030435">
    <property type="term" value="P:sporulation resulting in formation of a cellular spore"/>
    <property type="evidence" value="ECO:0007669"/>
    <property type="project" value="UniProtKB-KW"/>
</dbReference>
<dbReference type="Gene3D" id="3.40.50.1110">
    <property type="entry name" value="SGNH hydrolase"/>
    <property type="match status" value="1"/>
</dbReference>
<dbReference type="InterPro" id="IPR051532">
    <property type="entry name" value="Ester_Hydrolysis_Enzymes"/>
</dbReference>
<dbReference type="InterPro" id="IPR013830">
    <property type="entry name" value="SGNH_hydro"/>
</dbReference>
<dbReference type="InterPro" id="IPR036514">
    <property type="entry name" value="SGNH_hydro_sf"/>
</dbReference>
<dbReference type="PANTHER" id="PTHR30383:SF27">
    <property type="entry name" value="SPORE GERMINATION LIPASE LIPC"/>
    <property type="match status" value="1"/>
</dbReference>
<dbReference type="PANTHER" id="PTHR30383">
    <property type="entry name" value="THIOESTERASE 1/PROTEASE 1/LYSOPHOSPHOLIPASE L1"/>
    <property type="match status" value="1"/>
</dbReference>
<dbReference type="Pfam" id="PF13472">
    <property type="entry name" value="Lipase_GDSL_2"/>
    <property type="match status" value="1"/>
</dbReference>
<dbReference type="SUPFAM" id="SSF52266">
    <property type="entry name" value="SGNH hydrolase"/>
    <property type="match status" value="1"/>
</dbReference>
<reference key="1">
    <citation type="journal article" date="2004" name="J. Mol. Microbiol. Biotechnol.">
        <title>The complete genome sequence of Bacillus licheniformis DSM13, an organism with great industrial potential.</title>
        <authorList>
            <person name="Veith B."/>
            <person name="Herzberg C."/>
            <person name="Steckel S."/>
            <person name="Feesche J."/>
            <person name="Maurer K.H."/>
            <person name="Ehrenreich P."/>
            <person name="Baeumer S."/>
            <person name="Henne A."/>
            <person name="Liesegang H."/>
            <person name="Merkl R."/>
            <person name="Ehrenreich A."/>
            <person name="Gottschalk G."/>
        </authorList>
    </citation>
    <scope>NUCLEOTIDE SEQUENCE [LARGE SCALE GENOMIC DNA]</scope>
    <source>
        <strain>ATCC 14580 / DSM 13 / JCM 2505 / CCUG 7422 / NBRC 12200 / NCIMB 9375 / NCTC 10341 / NRRL NRS-1264 / Gibson 46</strain>
    </source>
</reference>
<reference key="2">
    <citation type="journal article" date="2004" name="Genome Biol.">
        <title>Complete genome sequence of the industrial bacterium Bacillus licheniformis and comparisons with closely related Bacillus species.</title>
        <authorList>
            <person name="Rey M.W."/>
            <person name="Ramaiya P."/>
            <person name="Nelson B.A."/>
            <person name="Brody-Karpin S.D."/>
            <person name="Zaretsky E.J."/>
            <person name="Tang M."/>
            <person name="Lopez de Leon A."/>
            <person name="Xiang H."/>
            <person name="Gusti V."/>
            <person name="Clausen I.G."/>
            <person name="Olsen P.B."/>
            <person name="Rasmussen M.D."/>
            <person name="Andersen J.T."/>
            <person name="Joergensen P.L."/>
            <person name="Larsen T.S."/>
            <person name="Sorokin A."/>
            <person name="Bolotin A."/>
            <person name="Lapidus A."/>
            <person name="Galleron N."/>
            <person name="Ehrlich S.D."/>
            <person name="Berka R.M."/>
        </authorList>
    </citation>
    <scope>NUCLEOTIDE SEQUENCE [LARGE SCALE GENOMIC DNA]</scope>
    <source>
        <strain>ATCC 14580 / DSM 13 / JCM 2505 / CCUG 7422 / NBRC 12200 / NCIMB 9375 / NCTC 10341 / NRRL NRS-1264 / Gibson 46</strain>
    </source>
</reference>
<organism>
    <name type="scientific">Bacillus licheniformis (strain ATCC 14580 / DSM 13 / JCM 2505 / CCUG 7422 / NBRC 12200 / NCIMB 9375 / NCTC 10341 / NRRL NRS-1264 / Gibson 46)</name>
    <dbReference type="NCBI Taxonomy" id="279010"/>
    <lineage>
        <taxon>Bacteria</taxon>
        <taxon>Bacillati</taxon>
        <taxon>Bacillota</taxon>
        <taxon>Bacilli</taxon>
        <taxon>Bacillales</taxon>
        <taxon>Bacillaceae</taxon>
        <taxon>Bacillus</taxon>
    </lineage>
</organism>
<sequence>MTLQYTALGDSLTVGVGAGLFEPGFVQRYKRKMEEDLNEEVSLIVFAKSGLETSEILAMLNEPFIMEQVKKADVITITGCGNDLLQSLEIYEKEKDEHVFLEASSHCQKNYSGMLEKIREIKGEKDTRYLVRLLNLYNPFPSIELADKWISGFNRHLKQLESAPQIKVIDTYAVFKGREKEYLSIDRVHPSSRGYEAMSEKLRAAGYGRLEG</sequence>